<sequence length="778" mass="87336">MIVTRSWLNEWIDISTISTDKLVKTLNSIGLEVDSISSYEVPQKIVFGRVLECKKHPDADKLNICQVDIGVSTRQIVCGASNVRAGLDVVVATIGAVMPDGTIIKPVTLRGIESEGMICSAKEIGLADINSGIIEIDSSIGKYKIGEEVSQNHLFSDDIIEVELTANRGDCLSIRGVARDLSAAFDKPLRERKIQEDEDKRVGIGRILSLSHENNLGVNIRYKAVDFKNLTLPFIVRLRLSQLDDKKESDVESLMLYATHSSGVILRAYDYALFCAKDETMAKISLCRDKNGFASVMTKDKKVSIVGVMQEELFKVAHSNGVVLIEATYIPPDVISKKMQENKIPAGISYYRASRGSEPDLNQGLDYCISVIEDNSESSVYGGTIEIDEPHEDKIISLNKKEIDEIVGANIDKAKITKILKNLGFDTTKSLADNFVIIVPKFRHDIVNKQDIVEEIVRLVGIDNIPSKPFTFTETNSFSSDYYDYKKRVTYRHKAAFSGFFESVHFVFDEKKVLQEYGFEILDESKELLNPIVNTLDTLRSTLLCGLLRATSNNINNGYSSVKLFEVGSVFNSQREESLKMALIFSGDREAESLANTGKPAKVDFALFVQKVSNVIGEFELREYKTKHTLSHPYQCAEIFIKEVSVGEIFRLHPNVEQKYDLDVTYMCELNFNKLPNDLKTAKQSSKYQASFRDLSIVMPQEMAYEKIKNVIDASSTKELVRFYVVDKYSDKSLGENMSLSIRFVLQSFDKTLEEEEITNAMNTILEALKNQLGVGIR</sequence>
<proteinExistence type="inferred from homology"/>
<organism>
    <name type="scientific">Sulfurimonas denitrificans (strain ATCC 33889 / DSM 1251)</name>
    <name type="common">Thiomicrospira denitrificans (strain ATCC 33889 / DSM 1251)</name>
    <dbReference type="NCBI Taxonomy" id="326298"/>
    <lineage>
        <taxon>Bacteria</taxon>
        <taxon>Pseudomonadati</taxon>
        <taxon>Campylobacterota</taxon>
        <taxon>Epsilonproteobacteria</taxon>
        <taxon>Campylobacterales</taxon>
        <taxon>Sulfurimonadaceae</taxon>
        <taxon>Sulfurimonas</taxon>
    </lineage>
</organism>
<dbReference type="EC" id="6.1.1.20" evidence="1"/>
<dbReference type="EMBL" id="CP000153">
    <property type="protein sequence ID" value="ABB44148.1"/>
    <property type="molecule type" value="Genomic_DNA"/>
</dbReference>
<dbReference type="RefSeq" id="WP_011372500.1">
    <property type="nucleotide sequence ID" value="NC_007575.1"/>
</dbReference>
<dbReference type="SMR" id="Q30S83"/>
<dbReference type="STRING" id="326298.Suden_0870"/>
<dbReference type="KEGG" id="tdn:Suden_0870"/>
<dbReference type="eggNOG" id="COG0072">
    <property type="taxonomic scope" value="Bacteria"/>
</dbReference>
<dbReference type="eggNOG" id="COG0073">
    <property type="taxonomic scope" value="Bacteria"/>
</dbReference>
<dbReference type="HOGENOM" id="CLU_016891_2_1_7"/>
<dbReference type="OrthoDB" id="9805455at2"/>
<dbReference type="Proteomes" id="UP000002714">
    <property type="component" value="Chromosome"/>
</dbReference>
<dbReference type="GO" id="GO:0009328">
    <property type="term" value="C:phenylalanine-tRNA ligase complex"/>
    <property type="evidence" value="ECO:0007669"/>
    <property type="project" value="TreeGrafter"/>
</dbReference>
<dbReference type="GO" id="GO:0005524">
    <property type="term" value="F:ATP binding"/>
    <property type="evidence" value="ECO:0007669"/>
    <property type="project" value="UniProtKB-UniRule"/>
</dbReference>
<dbReference type="GO" id="GO:0000287">
    <property type="term" value="F:magnesium ion binding"/>
    <property type="evidence" value="ECO:0007669"/>
    <property type="project" value="UniProtKB-UniRule"/>
</dbReference>
<dbReference type="GO" id="GO:0004826">
    <property type="term" value="F:phenylalanine-tRNA ligase activity"/>
    <property type="evidence" value="ECO:0007669"/>
    <property type="project" value="UniProtKB-UniRule"/>
</dbReference>
<dbReference type="GO" id="GO:0000049">
    <property type="term" value="F:tRNA binding"/>
    <property type="evidence" value="ECO:0007669"/>
    <property type="project" value="UniProtKB-KW"/>
</dbReference>
<dbReference type="GO" id="GO:0006432">
    <property type="term" value="P:phenylalanyl-tRNA aminoacylation"/>
    <property type="evidence" value="ECO:0007669"/>
    <property type="project" value="UniProtKB-UniRule"/>
</dbReference>
<dbReference type="CDD" id="cd00769">
    <property type="entry name" value="PheRS_beta_core"/>
    <property type="match status" value="1"/>
</dbReference>
<dbReference type="CDD" id="cd02796">
    <property type="entry name" value="tRNA_bind_bactPheRS"/>
    <property type="match status" value="1"/>
</dbReference>
<dbReference type="FunFam" id="2.40.50.140:FF:000045">
    <property type="entry name" value="Phenylalanine--tRNA ligase beta subunit"/>
    <property type="match status" value="1"/>
</dbReference>
<dbReference type="Gene3D" id="3.30.56.10">
    <property type="match status" value="2"/>
</dbReference>
<dbReference type="Gene3D" id="3.30.930.10">
    <property type="entry name" value="Bira Bifunctional Protein, Domain 2"/>
    <property type="match status" value="1"/>
</dbReference>
<dbReference type="Gene3D" id="3.30.70.380">
    <property type="entry name" value="Ferrodoxin-fold anticodon-binding domain"/>
    <property type="match status" value="1"/>
</dbReference>
<dbReference type="Gene3D" id="2.40.50.140">
    <property type="entry name" value="Nucleic acid-binding proteins"/>
    <property type="match status" value="1"/>
</dbReference>
<dbReference type="HAMAP" id="MF_00283">
    <property type="entry name" value="Phe_tRNA_synth_beta1"/>
    <property type="match status" value="1"/>
</dbReference>
<dbReference type="InterPro" id="IPR045864">
    <property type="entry name" value="aa-tRNA-synth_II/BPL/LPL"/>
</dbReference>
<dbReference type="InterPro" id="IPR005146">
    <property type="entry name" value="B3/B4_tRNA-bd"/>
</dbReference>
<dbReference type="InterPro" id="IPR009061">
    <property type="entry name" value="DNA-bd_dom_put_sf"/>
</dbReference>
<dbReference type="InterPro" id="IPR005121">
    <property type="entry name" value="Fdx_antiC-bd"/>
</dbReference>
<dbReference type="InterPro" id="IPR036690">
    <property type="entry name" value="Fdx_antiC-bd_sf"/>
</dbReference>
<dbReference type="InterPro" id="IPR012340">
    <property type="entry name" value="NA-bd_OB-fold"/>
</dbReference>
<dbReference type="InterPro" id="IPR045060">
    <property type="entry name" value="Phe-tRNA-ligase_IIc_bsu"/>
</dbReference>
<dbReference type="InterPro" id="IPR004532">
    <property type="entry name" value="Phe-tRNA-ligase_IIc_bsu_bact"/>
</dbReference>
<dbReference type="InterPro" id="IPR041616">
    <property type="entry name" value="PheRS_beta_core"/>
</dbReference>
<dbReference type="InterPro" id="IPR002547">
    <property type="entry name" value="tRNA-bd_dom"/>
</dbReference>
<dbReference type="InterPro" id="IPR033714">
    <property type="entry name" value="tRNA_bind_bactPheRS"/>
</dbReference>
<dbReference type="InterPro" id="IPR005147">
    <property type="entry name" value="tRNA_synthase_B5-dom"/>
</dbReference>
<dbReference type="NCBIfam" id="TIGR00472">
    <property type="entry name" value="pheT_bact"/>
    <property type="match status" value="1"/>
</dbReference>
<dbReference type="NCBIfam" id="NF045760">
    <property type="entry name" value="YtpR"/>
    <property type="match status" value="1"/>
</dbReference>
<dbReference type="PANTHER" id="PTHR10947:SF0">
    <property type="entry name" value="PHENYLALANINE--TRNA LIGASE BETA SUBUNIT"/>
    <property type="match status" value="1"/>
</dbReference>
<dbReference type="PANTHER" id="PTHR10947">
    <property type="entry name" value="PHENYLALANYL-TRNA SYNTHETASE BETA CHAIN AND LEUCINE-RICH REPEAT-CONTAINING PROTEIN 47"/>
    <property type="match status" value="1"/>
</dbReference>
<dbReference type="Pfam" id="PF03484">
    <property type="entry name" value="B5"/>
    <property type="match status" value="1"/>
</dbReference>
<dbReference type="Pfam" id="PF03147">
    <property type="entry name" value="FDX-ACB"/>
    <property type="match status" value="1"/>
</dbReference>
<dbReference type="Pfam" id="PF01588">
    <property type="entry name" value="tRNA_bind"/>
    <property type="match status" value="1"/>
</dbReference>
<dbReference type="Pfam" id="PF17759">
    <property type="entry name" value="tRNA_synthFbeta"/>
    <property type="match status" value="1"/>
</dbReference>
<dbReference type="SMART" id="SM00873">
    <property type="entry name" value="B3_4"/>
    <property type="match status" value="1"/>
</dbReference>
<dbReference type="SMART" id="SM00874">
    <property type="entry name" value="B5"/>
    <property type="match status" value="1"/>
</dbReference>
<dbReference type="SMART" id="SM00896">
    <property type="entry name" value="FDX-ACB"/>
    <property type="match status" value="1"/>
</dbReference>
<dbReference type="SUPFAM" id="SSF54991">
    <property type="entry name" value="Anticodon-binding domain of PheRS"/>
    <property type="match status" value="1"/>
</dbReference>
<dbReference type="SUPFAM" id="SSF55681">
    <property type="entry name" value="Class II aaRS and biotin synthetases"/>
    <property type="match status" value="1"/>
</dbReference>
<dbReference type="SUPFAM" id="SSF50249">
    <property type="entry name" value="Nucleic acid-binding proteins"/>
    <property type="match status" value="1"/>
</dbReference>
<dbReference type="SUPFAM" id="SSF56037">
    <property type="entry name" value="PheT/TilS domain"/>
    <property type="match status" value="1"/>
</dbReference>
<dbReference type="SUPFAM" id="SSF46955">
    <property type="entry name" value="Putative DNA-binding domain"/>
    <property type="match status" value="1"/>
</dbReference>
<dbReference type="PROSITE" id="PS51483">
    <property type="entry name" value="B5"/>
    <property type="match status" value="1"/>
</dbReference>
<dbReference type="PROSITE" id="PS51447">
    <property type="entry name" value="FDX_ACB"/>
    <property type="match status" value="1"/>
</dbReference>
<dbReference type="PROSITE" id="PS50886">
    <property type="entry name" value="TRBD"/>
    <property type="match status" value="1"/>
</dbReference>
<accession>Q30S83</accession>
<name>SYFB_SULDN</name>
<gene>
    <name evidence="1" type="primary">pheT</name>
    <name type="ordered locus">Suden_0870</name>
</gene>
<comment type="catalytic activity">
    <reaction evidence="1">
        <text>tRNA(Phe) + L-phenylalanine + ATP = L-phenylalanyl-tRNA(Phe) + AMP + diphosphate + H(+)</text>
        <dbReference type="Rhea" id="RHEA:19413"/>
        <dbReference type="Rhea" id="RHEA-COMP:9668"/>
        <dbReference type="Rhea" id="RHEA-COMP:9699"/>
        <dbReference type="ChEBI" id="CHEBI:15378"/>
        <dbReference type="ChEBI" id="CHEBI:30616"/>
        <dbReference type="ChEBI" id="CHEBI:33019"/>
        <dbReference type="ChEBI" id="CHEBI:58095"/>
        <dbReference type="ChEBI" id="CHEBI:78442"/>
        <dbReference type="ChEBI" id="CHEBI:78531"/>
        <dbReference type="ChEBI" id="CHEBI:456215"/>
        <dbReference type="EC" id="6.1.1.20"/>
    </reaction>
</comment>
<comment type="cofactor">
    <cofactor evidence="1">
        <name>Mg(2+)</name>
        <dbReference type="ChEBI" id="CHEBI:18420"/>
    </cofactor>
    <text evidence="1">Binds 2 magnesium ions per tetramer.</text>
</comment>
<comment type="subunit">
    <text evidence="1">Tetramer of two alpha and two beta subunits.</text>
</comment>
<comment type="subcellular location">
    <subcellularLocation>
        <location>Cytoplasm</location>
    </subcellularLocation>
</comment>
<comment type="similarity">
    <text evidence="1">Belongs to the phenylalanyl-tRNA synthetase beta subunit family. Type 1 subfamily.</text>
</comment>
<protein>
    <recommendedName>
        <fullName evidence="1">Phenylalanine--tRNA ligase beta subunit</fullName>
        <ecNumber evidence="1">6.1.1.20</ecNumber>
    </recommendedName>
    <alternativeName>
        <fullName evidence="1">Phenylalanyl-tRNA synthetase beta subunit</fullName>
        <shortName evidence="1">PheRS</shortName>
    </alternativeName>
</protein>
<reference key="1">
    <citation type="journal article" date="2008" name="Appl. Environ. Microbiol.">
        <title>Genome of the epsilonproteobacterial chemolithoautotroph Sulfurimonas denitrificans.</title>
        <authorList>
            <person name="Sievert S.M."/>
            <person name="Scott K.M."/>
            <person name="Klotz M.G."/>
            <person name="Chain P.S.G."/>
            <person name="Hauser L.J."/>
            <person name="Hemp J."/>
            <person name="Huegler M."/>
            <person name="Land M."/>
            <person name="Lapidus A."/>
            <person name="Larimer F.W."/>
            <person name="Lucas S."/>
            <person name="Malfatti S.A."/>
            <person name="Meyer F."/>
            <person name="Paulsen I.T."/>
            <person name="Ren Q."/>
            <person name="Simon J."/>
            <person name="Bailey K."/>
            <person name="Diaz E."/>
            <person name="Fitzpatrick K.A."/>
            <person name="Glover B."/>
            <person name="Gwatney N."/>
            <person name="Korajkic A."/>
            <person name="Long A."/>
            <person name="Mobberley J.M."/>
            <person name="Pantry S.N."/>
            <person name="Pazder G."/>
            <person name="Peterson S."/>
            <person name="Quintanilla J.D."/>
            <person name="Sprinkle R."/>
            <person name="Stephens J."/>
            <person name="Thomas P."/>
            <person name="Vaughn R."/>
            <person name="Weber M.J."/>
            <person name="Wooten L.L."/>
        </authorList>
    </citation>
    <scope>NUCLEOTIDE SEQUENCE [LARGE SCALE GENOMIC DNA]</scope>
    <source>
        <strain>ATCC 33889 / DSM 1251</strain>
    </source>
</reference>
<evidence type="ECO:0000255" key="1">
    <source>
        <dbReference type="HAMAP-Rule" id="MF_00283"/>
    </source>
</evidence>
<feature type="chain" id="PRO_0000232828" description="Phenylalanine--tRNA ligase beta subunit">
    <location>
        <begin position="1"/>
        <end position="778"/>
    </location>
</feature>
<feature type="domain" description="tRNA-binding" evidence="1">
    <location>
        <begin position="39"/>
        <end position="150"/>
    </location>
</feature>
<feature type="domain" description="B5" evidence="1">
    <location>
        <begin position="391"/>
        <end position="467"/>
    </location>
</feature>
<feature type="domain" description="FDX-ACB" evidence="1">
    <location>
        <begin position="686"/>
        <end position="778"/>
    </location>
</feature>
<feature type="binding site" evidence="1">
    <location>
        <position position="445"/>
    </location>
    <ligand>
        <name>Mg(2+)</name>
        <dbReference type="ChEBI" id="CHEBI:18420"/>
        <note>shared with alpha subunit</note>
    </ligand>
</feature>
<feature type="binding site" evidence="1">
    <location>
        <position position="451"/>
    </location>
    <ligand>
        <name>Mg(2+)</name>
        <dbReference type="ChEBI" id="CHEBI:18420"/>
        <note>shared with alpha subunit</note>
    </ligand>
</feature>
<feature type="binding site" evidence="1">
    <location>
        <position position="454"/>
    </location>
    <ligand>
        <name>Mg(2+)</name>
        <dbReference type="ChEBI" id="CHEBI:18420"/>
        <note>shared with alpha subunit</note>
    </ligand>
</feature>
<feature type="binding site" evidence="1">
    <location>
        <position position="455"/>
    </location>
    <ligand>
        <name>Mg(2+)</name>
        <dbReference type="ChEBI" id="CHEBI:18420"/>
        <note>shared with alpha subunit</note>
    </ligand>
</feature>
<keyword id="KW-0030">Aminoacyl-tRNA synthetase</keyword>
<keyword id="KW-0067">ATP-binding</keyword>
<keyword id="KW-0963">Cytoplasm</keyword>
<keyword id="KW-0436">Ligase</keyword>
<keyword id="KW-0460">Magnesium</keyword>
<keyword id="KW-0479">Metal-binding</keyword>
<keyword id="KW-0547">Nucleotide-binding</keyword>
<keyword id="KW-0648">Protein biosynthesis</keyword>
<keyword id="KW-1185">Reference proteome</keyword>
<keyword id="KW-0694">RNA-binding</keyword>
<keyword id="KW-0820">tRNA-binding</keyword>